<evidence type="ECO:0000250" key="1"/>
<evidence type="ECO:0000305" key="2"/>
<name>DHSC_RICCN</name>
<feature type="chain" id="PRO_0000203513" description="Succinate dehydrogenase cytochrome b556 subunit">
    <location>
        <begin position="1"/>
        <end position="124"/>
    </location>
</feature>
<feature type="topological domain" description="Cytoplasmic" evidence="1">
    <location>
        <begin position="1"/>
        <end position="29"/>
    </location>
</feature>
<feature type="transmembrane region" description="Helical" evidence="1">
    <location>
        <begin position="30"/>
        <end position="55"/>
    </location>
</feature>
<feature type="topological domain" description="Periplasmic" evidence="1">
    <location>
        <begin position="56"/>
        <end position="67"/>
    </location>
</feature>
<feature type="transmembrane region" description="Helical" evidence="1">
    <location>
        <begin position="68"/>
        <end position="88"/>
    </location>
</feature>
<feature type="topological domain" description="Cytoplasmic" evidence="1">
    <location>
        <begin position="89"/>
        <end position="103"/>
    </location>
</feature>
<feature type="transmembrane region" description="Helical" evidence="1">
    <location>
        <begin position="104"/>
        <end position="124"/>
    </location>
</feature>
<feature type="binding site" description="axial binding residue" evidence="1">
    <location>
        <position position="83"/>
    </location>
    <ligand>
        <name>heme</name>
        <dbReference type="ChEBI" id="CHEBI:30413"/>
        <note>ligand shared with second transmembrane subunit</note>
    </ligand>
    <ligandPart>
        <name>Fe</name>
        <dbReference type="ChEBI" id="CHEBI:18248"/>
    </ligandPart>
</feature>
<comment type="function">
    <text evidence="1">Membrane-anchoring subunit of succinate dehydrogenase (SDH).</text>
</comment>
<comment type="cofactor">
    <cofactor evidence="1">
        <name>heme</name>
        <dbReference type="ChEBI" id="CHEBI:30413"/>
    </cofactor>
    <text evidence="1">The heme is bound between the two transmembrane subunits.</text>
</comment>
<comment type="pathway">
    <text>Carbohydrate metabolism; tricarboxylic acid cycle.</text>
</comment>
<comment type="subunit">
    <text evidence="1">Part of an enzyme complex containing four subunits: a flavoprotein, an iron-sulfur protein, plus two membrane-anchoring proteins, SdhC and SdhD. The complex can form homotrimers (By similarity).</text>
</comment>
<comment type="subcellular location">
    <subcellularLocation>
        <location>Cell inner membrane</location>
        <topology>Multi-pass membrane protein</topology>
    </subcellularLocation>
</comment>
<comment type="similarity">
    <text evidence="2">Belongs to the cytochrome b560 family.</text>
</comment>
<reference key="1">
    <citation type="journal article" date="2001" name="Science">
        <title>Mechanisms of evolution in Rickettsia conorii and R. prowazekii.</title>
        <authorList>
            <person name="Ogata H."/>
            <person name="Audic S."/>
            <person name="Renesto-Audiffren P."/>
            <person name="Fournier P.-E."/>
            <person name="Barbe V."/>
            <person name="Samson D."/>
            <person name="Roux V."/>
            <person name="Cossart P."/>
            <person name="Weissenbach J."/>
            <person name="Claverie J.-M."/>
            <person name="Raoult D."/>
        </authorList>
    </citation>
    <scope>NUCLEOTIDE SEQUENCE [LARGE SCALE GENOMIC DNA]</scope>
    <source>
        <strain>ATCC VR-613 / Malish 7</strain>
    </source>
</reference>
<keyword id="KW-0997">Cell inner membrane</keyword>
<keyword id="KW-1003">Cell membrane</keyword>
<keyword id="KW-0249">Electron transport</keyword>
<keyword id="KW-0349">Heme</keyword>
<keyword id="KW-0408">Iron</keyword>
<keyword id="KW-0472">Membrane</keyword>
<keyword id="KW-0479">Metal-binding</keyword>
<keyword id="KW-0812">Transmembrane</keyword>
<keyword id="KW-1133">Transmembrane helix</keyword>
<keyword id="KW-0813">Transport</keyword>
<keyword id="KW-0816">Tricarboxylic acid cycle</keyword>
<organism>
    <name type="scientific">Rickettsia conorii (strain ATCC VR-613 / Malish 7)</name>
    <dbReference type="NCBI Taxonomy" id="272944"/>
    <lineage>
        <taxon>Bacteria</taxon>
        <taxon>Pseudomonadati</taxon>
        <taxon>Pseudomonadota</taxon>
        <taxon>Alphaproteobacteria</taxon>
        <taxon>Rickettsiales</taxon>
        <taxon>Rickettsiaceae</taxon>
        <taxon>Rickettsieae</taxon>
        <taxon>Rickettsia</taxon>
        <taxon>spotted fever group</taxon>
    </lineage>
</organism>
<accession>Q92J99</accession>
<proteinExistence type="inferred from homology"/>
<sequence>MTKTKQEIYNKRPTSPHLTIYKPQISSTLSILYRMTGVALFFAVSILVWWLILSKYDNNYLQLAECCIIKICLVAVSYAWFYHLCNGIRHLFWDIGYGFSIKLVNITGWCVVVGSVLLTVLLWV</sequence>
<dbReference type="EMBL" id="AE006914">
    <property type="protein sequence ID" value="AAL02706.1"/>
    <property type="molecule type" value="Genomic_DNA"/>
</dbReference>
<dbReference type="PIR" id="H97720">
    <property type="entry name" value="H97720"/>
</dbReference>
<dbReference type="RefSeq" id="WP_010976843.1">
    <property type="nucleotide sequence ID" value="NC_003103.1"/>
</dbReference>
<dbReference type="SMR" id="Q92J99"/>
<dbReference type="GeneID" id="928024"/>
<dbReference type="KEGG" id="rco:RC0168"/>
<dbReference type="HOGENOM" id="CLU_094691_3_1_5"/>
<dbReference type="UniPathway" id="UPA00223"/>
<dbReference type="Proteomes" id="UP000000816">
    <property type="component" value="Chromosome"/>
</dbReference>
<dbReference type="GO" id="GO:0005886">
    <property type="term" value="C:plasma membrane"/>
    <property type="evidence" value="ECO:0007669"/>
    <property type="project" value="UniProtKB-SubCell"/>
</dbReference>
<dbReference type="GO" id="GO:0009055">
    <property type="term" value="F:electron transfer activity"/>
    <property type="evidence" value="ECO:0007669"/>
    <property type="project" value="InterPro"/>
</dbReference>
<dbReference type="GO" id="GO:0046872">
    <property type="term" value="F:metal ion binding"/>
    <property type="evidence" value="ECO:0007669"/>
    <property type="project" value="UniProtKB-KW"/>
</dbReference>
<dbReference type="GO" id="GO:0006099">
    <property type="term" value="P:tricarboxylic acid cycle"/>
    <property type="evidence" value="ECO:0007669"/>
    <property type="project" value="UniProtKB-UniPathway"/>
</dbReference>
<dbReference type="CDD" id="cd03499">
    <property type="entry name" value="SQR_TypeC_SdhC"/>
    <property type="match status" value="1"/>
</dbReference>
<dbReference type="Gene3D" id="1.20.1300.10">
    <property type="entry name" value="Fumarate reductase/succinate dehydrogenase, transmembrane subunit"/>
    <property type="match status" value="1"/>
</dbReference>
<dbReference type="InterPro" id="IPR034804">
    <property type="entry name" value="SQR/QFR_C/D"/>
</dbReference>
<dbReference type="InterPro" id="IPR018495">
    <property type="entry name" value="Succ_DH_cyt_bsu_CS"/>
</dbReference>
<dbReference type="InterPro" id="IPR014314">
    <property type="entry name" value="Succ_DH_cytb556"/>
</dbReference>
<dbReference type="InterPro" id="IPR000701">
    <property type="entry name" value="SuccDH_FuR_B_TM-su"/>
</dbReference>
<dbReference type="NCBIfam" id="TIGR02970">
    <property type="entry name" value="succ_dehyd_cytB"/>
    <property type="match status" value="1"/>
</dbReference>
<dbReference type="PANTHER" id="PTHR10978">
    <property type="entry name" value="SUCCINATE DEHYDROGENASE CYTOCHROME B560 SUBUNIT"/>
    <property type="match status" value="1"/>
</dbReference>
<dbReference type="PANTHER" id="PTHR10978:SF5">
    <property type="entry name" value="SUCCINATE DEHYDROGENASE CYTOCHROME B560 SUBUNIT, MITOCHONDRIAL"/>
    <property type="match status" value="1"/>
</dbReference>
<dbReference type="Pfam" id="PF01127">
    <property type="entry name" value="Sdh_cyt"/>
    <property type="match status" value="1"/>
</dbReference>
<dbReference type="PIRSF" id="PIRSF000178">
    <property type="entry name" value="SDH_cyt_b560"/>
    <property type="match status" value="1"/>
</dbReference>
<dbReference type="SUPFAM" id="SSF81343">
    <property type="entry name" value="Fumarate reductase respiratory complex transmembrane subunits"/>
    <property type="match status" value="1"/>
</dbReference>
<dbReference type="PROSITE" id="PS01001">
    <property type="entry name" value="SDH_CYT_2"/>
    <property type="match status" value="1"/>
</dbReference>
<gene>
    <name type="primary">sdhC</name>
    <name type="ordered locus">RC0168</name>
</gene>
<protein>
    <recommendedName>
        <fullName>Succinate dehydrogenase cytochrome b556 subunit</fullName>
        <shortName>Cytochrome b-556</shortName>
    </recommendedName>
</protein>